<reference key="1">
    <citation type="journal article" date="1994" name="Eur. J. Biochem.">
        <title>Characterization of a rat C6 glioma-secreted follistatin-related protein (FRP). Cloning and sequence of the human homologue.</title>
        <authorList>
            <person name="Zwijsen A."/>
            <person name="Blockx H."/>
            <person name="van Arnhem W."/>
            <person name="Willems J."/>
            <person name="Fransen L."/>
            <person name="Devos K."/>
            <person name="Raymackers J."/>
            <person name="van de Voorde A."/>
            <person name="Slegers H."/>
        </authorList>
    </citation>
    <scope>NUCLEOTIDE SEQUENCE [MRNA]</scope>
    <scope>PARTIAL PROTEIN SEQUENCE</scope>
    <source>
        <tissue>Brain</tissue>
    </source>
</reference>
<reference key="2">
    <citation type="journal article" date="2004" name="Genome Res.">
        <title>The status, quality, and expansion of the NIH full-length cDNA project: the Mammalian Gene Collection (MGC).</title>
        <authorList>
            <consortium name="The MGC Project Team"/>
        </authorList>
    </citation>
    <scope>NUCLEOTIDE SEQUENCE [LARGE SCALE MRNA]</scope>
    <source>
        <tissue>Heart</tissue>
    </source>
</reference>
<reference key="3">
    <citation type="journal article" date="2003" name="Brain Res. Mol. Brain Res.">
        <title>Sensory neuron proteins interact with the intracellular domains of sodium channel NaV1.8.</title>
        <authorList>
            <person name="Malik-Hall M."/>
            <person name="Poon W.-Y.L."/>
            <person name="Baker M.D."/>
            <person name="Wood J.N."/>
            <person name="Okuse K."/>
        </authorList>
    </citation>
    <scope>INTERACTION WITH SCN10A</scope>
</reference>
<organism>
    <name type="scientific">Rattus norvegicus</name>
    <name type="common">Rat</name>
    <dbReference type="NCBI Taxonomy" id="10116"/>
    <lineage>
        <taxon>Eukaryota</taxon>
        <taxon>Metazoa</taxon>
        <taxon>Chordata</taxon>
        <taxon>Craniata</taxon>
        <taxon>Vertebrata</taxon>
        <taxon>Euteleostomi</taxon>
        <taxon>Mammalia</taxon>
        <taxon>Eutheria</taxon>
        <taxon>Euarchontoglires</taxon>
        <taxon>Glires</taxon>
        <taxon>Rodentia</taxon>
        <taxon>Myomorpha</taxon>
        <taxon>Muroidea</taxon>
        <taxon>Muridae</taxon>
        <taxon>Murinae</taxon>
        <taxon>Rattus</taxon>
    </lineage>
</organism>
<accession>Q62632</accession>
<dbReference type="EMBL" id="U06864">
    <property type="protein sequence ID" value="AAA66063.1"/>
    <property type="molecule type" value="mRNA"/>
</dbReference>
<dbReference type="EMBL" id="BC087014">
    <property type="protein sequence ID" value="AAH87014.1"/>
    <property type="molecule type" value="mRNA"/>
</dbReference>
<dbReference type="PIR" id="S51361">
    <property type="entry name" value="S51361"/>
</dbReference>
<dbReference type="RefSeq" id="NP_077345.1">
    <property type="nucleotide sequence ID" value="NM_024369.2"/>
</dbReference>
<dbReference type="SMR" id="Q62632"/>
<dbReference type="FunCoup" id="Q62632">
    <property type="interactions" value="1056"/>
</dbReference>
<dbReference type="IntAct" id="Q62632">
    <property type="interactions" value="1"/>
</dbReference>
<dbReference type="MEROPS" id="I01.967"/>
<dbReference type="GlyCosmos" id="Q62632">
    <property type="glycosylation" value="3 sites, No reported glycans"/>
</dbReference>
<dbReference type="GlyGen" id="Q62632">
    <property type="glycosylation" value="3 sites"/>
</dbReference>
<dbReference type="PhosphoSitePlus" id="Q62632"/>
<dbReference type="Ensembl" id="ENSRNOT00000103472.1">
    <property type="protein sequence ID" value="ENSRNOP00000095289.1"/>
    <property type="gene ID" value="ENSRNOG00000002746.8"/>
</dbReference>
<dbReference type="GeneID" id="79210"/>
<dbReference type="KEGG" id="rno:79210"/>
<dbReference type="UCSC" id="RGD:68955">
    <property type="organism name" value="rat"/>
</dbReference>
<dbReference type="AGR" id="RGD:68955"/>
<dbReference type="CTD" id="11167"/>
<dbReference type="RGD" id="68955">
    <property type="gene designation" value="Fstl1"/>
</dbReference>
<dbReference type="eggNOG" id="ENOG502QQAG">
    <property type="taxonomic scope" value="Eukaryota"/>
</dbReference>
<dbReference type="GeneTree" id="ENSGT00940000157784"/>
<dbReference type="HOGENOM" id="CLU_038229_0_0_1"/>
<dbReference type="InParanoid" id="Q62632"/>
<dbReference type="OrthoDB" id="22332at9989"/>
<dbReference type="PhylomeDB" id="Q62632"/>
<dbReference type="Reactome" id="R-RNO-201451">
    <property type="pathway name" value="Signaling by BMP"/>
</dbReference>
<dbReference type="Reactome" id="R-RNO-381426">
    <property type="pathway name" value="Regulation of Insulin-like Growth Factor (IGF) transport and uptake by Insulin-like Growth Factor Binding Proteins (IGFBPs)"/>
</dbReference>
<dbReference type="Reactome" id="R-RNO-8957275">
    <property type="pathway name" value="Post-translational protein phosphorylation"/>
</dbReference>
<dbReference type="PRO" id="PR:Q62632"/>
<dbReference type="Proteomes" id="UP000002494">
    <property type="component" value="Chromosome 11"/>
</dbReference>
<dbReference type="Bgee" id="ENSRNOG00000002746">
    <property type="expression patterns" value="Expressed in esophagus and 19 other cell types or tissues"/>
</dbReference>
<dbReference type="ExpressionAtlas" id="Q62632">
    <property type="expression patterns" value="baseline and differential"/>
</dbReference>
<dbReference type="GO" id="GO:0005576">
    <property type="term" value="C:extracellular region"/>
    <property type="evidence" value="ECO:0000318"/>
    <property type="project" value="GO_Central"/>
</dbReference>
<dbReference type="GO" id="GO:0005509">
    <property type="term" value="F:calcium ion binding"/>
    <property type="evidence" value="ECO:0007669"/>
    <property type="project" value="InterPro"/>
</dbReference>
<dbReference type="GO" id="GO:0008201">
    <property type="term" value="F:heparin binding"/>
    <property type="evidence" value="ECO:0007669"/>
    <property type="project" value="UniProtKB-KW"/>
</dbReference>
<dbReference type="GO" id="GO:0030154">
    <property type="term" value="P:cell differentiation"/>
    <property type="evidence" value="ECO:0000318"/>
    <property type="project" value="GO_Central"/>
</dbReference>
<dbReference type="GO" id="GO:0045446">
    <property type="term" value="P:endothelial cell differentiation"/>
    <property type="evidence" value="ECO:0000250"/>
    <property type="project" value="UniProtKB"/>
</dbReference>
<dbReference type="GO" id="GO:0043542">
    <property type="term" value="P:endothelial cell migration"/>
    <property type="evidence" value="ECO:0000250"/>
    <property type="project" value="UniProtKB"/>
</dbReference>
<dbReference type="GO" id="GO:0061484">
    <property type="term" value="P:hematopoietic stem cell homeostasis"/>
    <property type="evidence" value="ECO:0000266"/>
    <property type="project" value="RGD"/>
</dbReference>
<dbReference type="GO" id="GO:0043066">
    <property type="term" value="P:negative regulation of apoptotic process"/>
    <property type="evidence" value="ECO:0000250"/>
    <property type="project" value="UniProtKB"/>
</dbReference>
<dbReference type="GO" id="GO:0030510">
    <property type="term" value="P:regulation of BMP signaling pathway"/>
    <property type="evidence" value="ECO:0000318"/>
    <property type="project" value="GO_Central"/>
</dbReference>
<dbReference type="CDD" id="cd16233">
    <property type="entry name" value="EFh_SPARC_FSTL1"/>
    <property type="match status" value="1"/>
</dbReference>
<dbReference type="CDD" id="cd00104">
    <property type="entry name" value="KAZAL_FS"/>
    <property type="match status" value="1"/>
</dbReference>
<dbReference type="FunFam" id="3.30.60.30:FF:000017">
    <property type="entry name" value="Follistatin like 1"/>
    <property type="match status" value="1"/>
</dbReference>
<dbReference type="Gene3D" id="3.30.60.30">
    <property type="match status" value="1"/>
</dbReference>
<dbReference type="Gene3D" id="1.10.238.10">
    <property type="entry name" value="EF-hand"/>
    <property type="match status" value="1"/>
</dbReference>
<dbReference type="InterPro" id="IPR011992">
    <property type="entry name" value="EF-hand-dom_pair"/>
</dbReference>
<dbReference type="InterPro" id="IPR057020">
    <property type="entry name" value="EF-hand_FSTL1"/>
</dbReference>
<dbReference type="InterPro" id="IPR002048">
    <property type="entry name" value="EF_hand_dom"/>
</dbReference>
<dbReference type="InterPro" id="IPR003645">
    <property type="entry name" value="Fol_N"/>
</dbReference>
<dbReference type="InterPro" id="IPR015369">
    <property type="entry name" value="Follistatin/Osteonectin_EGF"/>
</dbReference>
<dbReference type="InterPro" id="IPR002350">
    <property type="entry name" value="Kazal_dom"/>
</dbReference>
<dbReference type="InterPro" id="IPR036058">
    <property type="entry name" value="Kazal_dom_sf"/>
</dbReference>
<dbReference type="InterPro" id="IPR050653">
    <property type="entry name" value="Prot_Inhib_GrowthFact_Antg"/>
</dbReference>
<dbReference type="PANTHER" id="PTHR10913">
    <property type="entry name" value="FOLLISTATIN-RELATED"/>
    <property type="match status" value="1"/>
</dbReference>
<dbReference type="PANTHER" id="PTHR10913:SF13">
    <property type="entry name" value="FOLLISTATIN-RELATED PROTEIN 1"/>
    <property type="match status" value="1"/>
</dbReference>
<dbReference type="Pfam" id="PF23564">
    <property type="entry name" value="EF-hand_FSTL1"/>
    <property type="match status" value="1"/>
</dbReference>
<dbReference type="Pfam" id="PF09289">
    <property type="entry name" value="FOLN"/>
    <property type="match status" value="1"/>
</dbReference>
<dbReference type="Pfam" id="PF07648">
    <property type="entry name" value="Kazal_2"/>
    <property type="match status" value="1"/>
</dbReference>
<dbReference type="Pfam" id="PF23244">
    <property type="entry name" value="VWF"/>
    <property type="match status" value="1"/>
</dbReference>
<dbReference type="SMART" id="SM00274">
    <property type="entry name" value="FOLN"/>
    <property type="match status" value="1"/>
</dbReference>
<dbReference type="SMART" id="SM00280">
    <property type="entry name" value="KAZAL"/>
    <property type="match status" value="1"/>
</dbReference>
<dbReference type="SUPFAM" id="SSF47473">
    <property type="entry name" value="EF-hand"/>
    <property type="match status" value="1"/>
</dbReference>
<dbReference type="SUPFAM" id="SSF57603">
    <property type="entry name" value="FnI-like domain"/>
    <property type="match status" value="1"/>
</dbReference>
<dbReference type="SUPFAM" id="SSF100895">
    <property type="entry name" value="Kazal-type serine protease inhibitors"/>
    <property type="match status" value="1"/>
</dbReference>
<dbReference type="PROSITE" id="PS50222">
    <property type="entry name" value="EF_HAND_2"/>
    <property type="match status" value="2"/>
</dbReference>
<dbReference type="PROSITE" id="PS51465">
    <property type="entry name" value="KAZAL_2"/>
    <property type="match status" value="1"/>
</dbReference>
<protein>
    <recommendedName>
        <fullName>Follistatin-related protein 1</fullName>
    </recommendedName>
    <alternativeName>
        <fullName>Follistatin-like protein 1</fullName>
    </alternativeName>
</protein>
<sequence length="306" mass="34622">MWKRWLALALVTIALVHGEEEQRSKSKICANVFCGAGRECAVTEKGEPTCLCIEQCKPHKRPVCGSNGKTYLNHCELHRDACLTGSKIQVDYDGHCKEKKSVSPSASPVVCYQANRDELRRRIIQWLEAEIIPDGWFSKGSNYSEILDKYFKSFDNGDSHLDSSEFLKFVEQNETAVNITAYPNQENNKLLRGLCVDALIELSDENADWKLSFQEFLKCLNPSFNPPEKKCALEDETYADGAETEVDCNRCVCSCGHWVCTAMTCDGKNQKGVQTHTEEEMTRYAQELQKHQGTAEKTKKVNTKEI</sequence>
<comment type="function">
    <text evidence="1 2">Secreted glycoprotein that is involved in various physiological processes, such as angiogenesis, regulation of the immune response, cell proliferation and differentiation (By similarity). Plays a role in the development of the central nervous system, skeletal system, lungs, and ureter. Promotes endothelial cell survival, migration and differentiation into network structures in an AKT-dependent manner. Also promotes survival of cardiac myocytes (By similarity). Initiates various signaling cascades by activating different receptors on the cell surface such as DIP2A, TLR4 or BMP receptors (By similarity).</text>
</comment>
<comment type="subunit">
    <text evidence="1 2 6">Homodimer (By similarity). Interacts with SCN10A (PubMed:12591166). Interacts with DIP2A; DIP2A may act as a cell surface receptor for FSTL1. Interacts with BMP4. Interacts with CD14; this interaction promotes TL4-mediated signaling cascade (By similarity).</text>
</comment>
<comment type="subcellular location">
    <subcellularLocation>
        <location>Secreted</location>
    </subcellularLocation>
</comment>
<keyword id="KW-0903">Direct protein sequencing</keyword>
<keyword id="KW-1015">Disulfide bond</keyword>
<keyword id="KW-0325">Glycoprotein</keyword>
<keyword id="KW-0358">Heparin-binding</keyword>
<keyword id="KW-0597">Phosphoprotein</keyword>
<keyword id="KW-1185">Reference proteome</keyword>
<keyword id="KW-0677">Repeat</keyword>
<keyword id="KW-0964">Secreted</keyword>
<keyword id="KW-0732">Signal</keyword>
<evidence type="ECO:0000250" key="1">
    <source>
        <dbReference type="UniProtKB" id="Q12841"/>
    </source>
</evidence>
<evidence type="ECO:0000250" key="2">
    <source>
        <dbReference type="UniProtKB" id="Q62356"/>
    </source>
</evidence>
<evidence type="ECO:0000255" key="3"/>
<evidence type="ECO:0000255" key="4">
    <source>
        <dbReference type="PROSITE-ProRule" id="PRU00448"/>
    </source>
</evidence>
<evidence type="ECO:0000255" key="5">
    <source>
        <dbReference type="PROSITE-ProRule" id="PRU00798"/>
    </source>
</evidence>
<evidence type="ECO:0000269" key="6">
    <source>
    </source>
</evidence>
<evidence type="ECO:0000269" key="7">
    <source>
    </source>
</evidence>
<feature type="signal peptide" evidence="7">
    <location>
        <begin position="1"/>
        <end position="18"/>
    </location>
</feature>
<feature type="chain" id="PRO_0000010114" description="Follistatin-related protein 1">
    <location>
        <begin position="19"/>
        <end position="306"/>
    </location>
</feature>
<feature type="domain" description="Follistatin-like">
    <location>
        <begin position="28"/>
        <end position="51"/>
    </location>
</feature>
<feature type="domain" description="Kazal-like" evidence="5">
    <location>
        <begin position="46"/>
        <end position="98"/>
    </location>
</feature>
<feature type="domain" description="EF-hand 1" evidence="4">
    <location>
        <begin position="142"/>
        <end position="176"/>
    </location>
</feature>
<feature type="domain" description="EF-hand 2" evidence="4">
    <location>
        <begin position="191"/>
        <end position="226"/>
    </location>
</feature>
<feature type="domain" description="VWFC">
    <location>
        <begin position="231"/>
        <end position="285"/>
    </location>
</feature>
<feature type="modified residue" description="Phosphoserine" evidence="1">
    <location>
        <position position="163"/>
    </location>
</feature>
<feature type="glycosylation site" description="N-linked (GlcNAc...) asparagine" evidence="3">
    <location>
        <position position="142"/>
    </location>
</feature>
<feature type="glycosylation site" description="N-linked (GlcNAc...) asparagine" evidence="3">
    <location>
        <position position="173"/>
    </location>
</feature>
<feature type="glycosylation site" description="N-linked (GlcNAc...) asparagine" evidence="3">
    <location>
        <position position="178"/>
    </location>
</feature>
<feature type="disulfide bond" evidence="2">
    <location>
        <begin position="29"/>
        <end position="40"/>
    </location>
</feature>
<feature type="disulfide bond" evidence="2">
    <location>
        <begin position="34"/>
        <end position="50"/>
    </location>
</feature>
<feature type="disulfide bond" evidence="5">
    <location>
        <begin position="52"/>
        <end position="82"/>
    </location>
</feature>
<feature type="disulfide bond" evidence="5">
    <location>
        <begin position="56"/>
        <end position="75"/>
    </location>
</feature>
<feature type="disulfide bond" evidence="5">
    <location>
        <begin position="64"/>
        <end position="96"/>
    </location>
</feature>
<name>FSTL1_RAT</name>
<proteinExistence type="evidence at protein level"/>
<gene>
    <name type="primary">Fstl1</name>
    <name type="synonym">Frp</name>
</gene>